<name>NSE1_DROME</name>
<dbReference type="EC" id="2.3.2.27" evidence="2"/>
<dbReference type="EMBL" id="AE014134">
    <property type="protein sequence ID" value="AAF52422.1"/>
    <property type="molecule type" value="Genomic_DNA"/>
</dbReference>
<dbReference type="EMBL" id="AY051646">
    <property type="protein sequence ID" value="AAK93070.1"/>
    <property type="molecule type" value="mRNA"/>
</dbReference>
<dbReference type="RefSeq" id="NP_001260145.1">
    <property type="nucleotide sequence ID" value="NM_001273216.1"/>
</dbReference>
<dbReference type="RefSeq" id="NP_609063.1">
    <property type="nucleotide sequence ID" value="NM_135219.3"/>
</dbReference>
<dbReference type="SMR" id="Q9VMA0"/>
<dbReference type="BioGRID" id="60091">
    <property type="interactions" value="2"/>
</dbReference>
<dbReference type="ComplexPortal" id="CPX-2651">
    <property type="entry name" value="SMC5-SMC6 SUMO ligase complex, qjt variant"/>
</dbReference>
<dbReference type="ComplexPortal" id="CPX-2655">
    <property type="entry name" value="SMC5-SMC6 SUMO ligase complex, cerv variant"/>
</dbReference>
<dbReference type="FunCoup" id="Q9VMA0">
    <property type="interactions" value="1221"/>
</dbReference>
<dbReference type="IntAct" id="Q9VMA0">
    <property type="interactions" value="1"/>
</dbReference>
<dbReference type="STRING" id="7227.FBpp0305541"/>
<dbReference type="iPTMnet" id="Q9VMA0"/>
<dbReference type="PaxDb" id="7227-FBpp0305541"/>
<dbReference type="DNASU" id="33938"/>
<dbReference type="EnsemblMetazoa" id="FBtr0079319">
    <property type="protein sequence ID" value="FBpp0078948"/>
    <property type="gene ID" value="FBgn0031848"/>
</dbReference>
<dbReference type="EnsemblMetazoa" id="FBtr0333349">
    <property type="protein sequence ID" value="FBpp0305541"/>
    <property type="gene ID" value="FBgn0031848"/>
</dbReference>
<dbReference type="GeneID" id="33938"/>
<dbReference type="KEGG" id="dme:Dmel_CG11329"/>
<dbReference type="UCSC" id="CG11329-RA">
    <property type="organism name" value="d. melanogaster"/>
</dbReference>
<dbReference type="AGR" id="FB:FBgn0031848"/>
<dbReference type="CTD" id="33938"/>
<dbReference type="FlyBase" id="FBgn0031848">
    <property type="gene designation" value="Nse1"/>
</dbReference>
<dbReference type="VEuPathDB" id="VectorBase:FBgn0031848"/>
<dbReference type="eggNOG" id="KOG4718">
    <property type="taxonomic scope" value="Eukaryota"/>
</dbReference>
<dbReference type="GeneTree" id="ENSGT00390000009084"/>
<dbReference type="HOGENOM" id="CLU_045153_3_0_1"/>
<dbReference type="InParanoid" id="Q9VMA0"/>
<dbReference type="OMA" id="WTQMGYF"/>
<dbReference type="OrthoDB" id="185455at2759"/>
<dbReference type="PhylomeDB" id="Q9VMA0"/>
<dbReference type="BioGRID-ORCS" id="33938">
    <property type="hits" value="0 hits in 1 CRISPR screen"/>
</dbReference>
<dbReference type="GenomeRNAi" id="33938"/>
<dbReference type="PRO" id="PR:Q9VMA0"/>
<dbReference type="Proteomes" id="UP000000803">
    <property type="component" value="Chromosome 2L"/>
</dbReference>
<dbReference type="Bgee" id="FBgn0031848">
    <property type="expression patterns" value="Expressed in ovary and 14 other cell types or tissues"/>
</dbReference>
<dbReference type="ExpressionAtlas" id="Q9VMA0">
    <property type="expression patterns" value="baseline and differential"/>
</dbReference>
<dbReference type="GO" id="GO:0005634">
    <property type="term" value="C:nucleus"/>
    <property type="evidence" value="ECO:0000250"/>
    <property type="project" value="FlyBase"/>
</dbReference>
<dbReference type="GO" id="GO:0030915">
    <property type="term" value="C:Smc5-Smc6 complex"/>
    <property type="evidence" value="ECO:0000250"/>
    <property type="project" value="UniProtKB"/>
</dbReference>
<dbReference type="GO" id="GO:0061630">
    <property type="term" value="F:ubiquitin protein ligase activity"/>
    <property type="evidence" value="ECO:0000250"/>
    <property type="project" value="UniProtKB"/>
</dbReference>
<dbReference type="GO" id="GO:0004842">
    <property type="term" value="F:ubiquitin-protein transferase activity"/>
    <property type="evidence" value="ECO:0000250"/>
    <property type="project" value="FlyBase"/>
</dbReference>
<dbReference type="GO" id="GO:0008270">
    <property type="term" value="F:zinc ion binding"/>
    <property type="evidence" value="ECO:0000255"/>
    <property type="project" value="FlyBase"/>
</dbReference>
<dbReference type="GO" id="GO:0006974">
    <property type="term" value="P:DNA damage response"/>
    <property type="evidence" value="ECO:0000250"/>
    <property type="project" value="UniProtKB"/>
</dbReference>
<dbReference type="GO" id="GO:0006281">
    <property type="term" value="P:DNA repair"/>
    <property type="evidence" value="ECO:0000250"/>
    <property type="project" value="FlyBase"/>
</dbReference>
<dbReference type="GO" id="GO:0000724">
    <property type="term" value="P:double-strand break repair via homologous recombination"/>
    <property type="evidence" value="ECO:0000318"/>
    <property type="project" value="GO_Central"/>
</dbReference>
<dbReference type="GO" id="GO:0016567">
    <property type="term" value="P:protein ubiquitination"/>
    <property type="evidence" value="ECO:0000250"/>
    <property type="project" value="FlyBase"/>
</dbReference>
<dbReference type="FunFam" id="1.10.10.10:FF:001049">
    <property type="entry name" value="Non-SMC element 1, isoform B"/>
    <property type="match status" value="1"/>
</dbReference>
<dbReference type="Gene3D" id="1.10.10.10">
    <property type="entry name" value="Winged helix-like DNA-binding domain superfamily/Winged helix DNA-binding domain"/>
    <property type="match status" value="1"/>
</dbReference>
<dbReference type="Gene3D" id="3.30.40.10">
    <property type="entry name" value="Zinc/RING finger domain, C3HC4 (zinc finger)"/>
    <property type="match status" value="1"/>
</dbReference>
<dbReference type="InterPro" id="IPR011513">
    <property type="entry name" value="Nse1"/>
</dbReference>
<dbReference type="InterPro" id="IPR014857">
    <property type="entry name" value="Nse1_RING_C4HC3-type"/>
</dbReference>
<dbReference type="InterPro" id="IPR036388">
    <property type="entry name" value="WH-like_DNA-bd_sf"/>
</dbReference>
<dbReference type="InterPro" id="IPR013083">
    <property type="entry name" value="Znf_RING/FYVE/PHD"/>
</dbReference>
<dbReference type="PANTHER" id="PTHR20973">
    <property type="entry name" value="NON-SMC ELEMENT 1-RELATED"/>
    <property type="match status" value="1"/>
</dbReference>
<dbReference type="PANTHER" id="PTHR20973:SF0">
    <property type="entry name" value="NON-STRUCTURAL MAINTENANCE OF CHROMOSOMES ELEMENT 1 HOMOLOG"/>
    <property type="match status" value="1"/>
</dbReference>
<dbReference type="Pfam" id="PF07574">
    <property type="entry name" value="SMC_Nse1"/>
    <property type="match status" value="1"/>
</dbReference>
<dbReference type="Pfam" id="PF08746">
    <property type="entry name" value="zf-RING-like"/>
    <property type="match status" value="1"/>
</dbReference>
<dbReference type="SUPFAM" id="SSF57850">
    <property type="entry name" value="RING/U-box"/>
    <property type="match status" value="1"/>
</dbReference>
<protein>
    <recommendedName>
        <fullName>Non-structural maintenance of chromosomes element 1 homolog</fullName>
        <shortName>Non-SMC element 1 homolog</shortName>
        <ecNumber evidence="2">2.3.2.27</ecNumber>
    </recommendedName>
</protein>
<gene>
    <name evidence="7" type="primary">Nse1</name>
    <name evidence="7" type="ORF">CG11329</name>
</gene>
<comment type="function">
    <text evidence="2 5">Component of the SMC5-SMC6 complex, a complex involved in repair of DNA double-strand breaks by homologous recombination (PubMed:23555814). The complex may promote sister chromatid homologous recombination by recruiting the SMC1-SMC3 cohesin complex to double-strand breaks (By similarity).</text>
</comment>
<comment type="catalytic activity">
    <reaction evidence="2">
        <text>S-ubiquitinyl-[E2 ubiquitin-conjugating enzyme]-L-cysteine + [acceptor protein]-L-lysine = [E2 ubiquitin-conjugating enzyme]-L-cysteine + N(6)-ubiquitinyl-[acceptor protein]-L-lysine.</text>
        <dbReference type="EC" id="2.3.2.27"/>
    </reaction>
</comment>
<comment type="subunit">
    <text evidence="2 5">Component of the Smc5-Smc6 complex which consists at least of Smc5, Smc6, Nse1, Nse2, Nse4 and MAGE. Nse1, Nse4 and MAGE probably form a subcomplex that bridges the head domains of the Smc5-Smc6 heterodimer (By similarity). Interacts with MAGE and Nse4.</text>
</comment>
<comment type="subcellular location">
    <subcellularLocation>
        <location evidence="1">Nucleus</location>
    </subcellularLocation>
</comment>
<comment type="similarity">
    <text evidence="6">Belongs to the NSE1 family.</text>
</comment>
<sequence length="235" mass="26774">MELVKRGFLRACKNHSYLSFELIDDILAPLCANHKTTKPGSKEAIRALVAEINDTISDLGQLLVFIKYPVKAEEYLVYAKTDATPDSVANTGLTAEECQYFSKLLDKIASEEDCHIAWNDAYNDIVLQASSKPLKKSRMQELLQKWIQMGYFMEVTDRIYLGPRSLVELSFYLSSNHADNIKNCTLCKCLVLWDIRCGSCNIQYHRGCIQTYLQRRDICPSCGNLWTTPIRRSIG</sequence>
<accession>Q9VMA0</accession>
<proteinExistence type="evidence at protein level"/>
<reference key="1">
    <citation type="journal article" date="2000" name="Science">
        <title>The genome sequence of Drosophila melanogaster.</title>
        <authorList>
            <person name="Adams M.D."/>
            <person name="Celniker S.E."/>
            <person name="Holt R.A."/>
            <person name="Evans C.A."/>
            <person name="Gocayne J.D."/>
            <person name="Amanatides P.G."/>
            <person name="Scherer S.E."/>
            <person name="Li P.W."/>
            <person name="Hoskins R.A."/>
            <person name="Galle R.F."/>
            <person name="George R.A."/>
            <person name="Lewis S.E."/>
            <person name="Richards S."/>
            <person name="Ashburner M."/>
            <person name="Henderson S.N."/>
            <person name="Sutton G.G."/>
            <person name="Wortman J.R."/>
            <person name="Yandell M.D."/>
            <person name="Zhang Q."/>
            <person name="Chen L.X."/>
            <person name="Brandon R.C."/>
            <person name="Rogers Y.-H.C."/>
            <person name="Blazej R.G."/>
            <person name="Champe M."/>
            <person name="Pfeiffer B.D."/>
            <person name="Wan K.H."/>
            <person name="Doyle C."/>
            <person name="Baxter E.G."/>
            <person name="Helt G."/>
            <person name="Nelson C.R."/>
            <person name="Miklos G.L.G."/>
            <person name="Abril J.F."/>
            <person name="Agbayani A."/>
            <person name="An H.-J."/>
            <person name="Andrews-Pfannkoch C."/>
            <person name="Baldwin D."/>
            <person name="Ballew R.M."/>
            <person name="Basu A."/>
            <person name="Baxendale J."/>
            <person name="Bayraktaroglu L."/>
            <person name="Beasley E.M."/>
            <person name="Beeson K.Y."/>
            <person name="Benos P.V."/>
            <person name="Berman B.P."/>
            <person name="Bhandari D."/>
            <person name="Bolshakov S."/>
            <person name="Borkova D."/>
            <person name="Botchan M.R."/>
            <person name="Bouck J."/>
            <person name="Brokstein P."/>
            <person name="Brottier P."/>
            <person name="Burtis K.C."/>
            <person name="Busam D.A."/>
            <person name="Butler H."/>
            <person name="Cadieu E."/>
            <person name="Center A."/>
            <person name="Chandra I."/>
            <person name="Cherry J.M."/>
            <person name="Cawley S."/>
            <person name="Dahlke C."/>
            <person name="Davenport L.B."/>
            <person name="Davies P."/>
            <person name="de Pablos B."/>
            <person name="Delcher A."/>
            <person name="Deng Z."/>
            <person name="Mays A.D."/>
            <person name="Dew I."/>
            <person name="Dietz S.M."/>
            <person name="Dodson K."/>
            <person name="Doup L.E."/>
            <person name="Downes M."/>
            <person name="Dugan-Rocha S."/>
            <person name="Dunkov B.C."/>
            <person name="Dunn P."/>
            <person name="Durbin K.J."/>
            <person name="Evangelista C.C."/>
            <person name="Ferraz C."/>
            <person name="Ferriera S."/>
            <person name="Fleischmann W."/>
            <person name="Fosler C."/>
            <person name="Gabrielian A.E."/>
            <person name="Garg N.S."/>
            <person name="Gelbart W.M."/>
            <person name="Glasser K."/>
            <person name="Glodek A."/>
            <person name="Gong F."/>
            <person name="Gorrell J.H."/>
            <person name="Gu Z."/>
            <person name="Guan P."/>
            <person name="Harris M."/>
            <person name="Harris N.L."/>
            <person name="Harvey D.A."/>
            <person name="Heiman T.J."/>
            <person name="Hernandez J.R."/>
            <person name="Houck J."/>
            <person name="Hostin D."/>
            <person name="Houston K.A."/>
            <person name="Howland T.J."/>
            <person name="Wei M.-H."/>
            <person name="Ibegwam C."/>
            <person name="Jalali M."/>
            <person name="Kalush F."/>
            <person name="Karpen G.H."/>
            <person name="Ke Z."/>
            <person name="Kennison J.A."/>
            <person name="Ketchum K.A."/>
            <person name="Kimmel B.E."/>
            <person name="Kodira C.D."/>
            <person name="Kraft C.L."/>
            <person name="Kravitz S."/>
            <person name="Kulp D."/>
            <person name="Lai Z."/>
            <person name="Lasko P."/>
            <person name="Lei Y."/>
            <person name="Levitsky A.A."/>
            <person name="Li J.H."/>
            <person name="Li Z."/>
            <person name="Liang Y."/>
            <person name="Lin X."/>
            <person name="Liu X."/>
            <person name="Mattei B."/>
            <person name="McIntosh T.C."/>
            <person name="McLeod M.P."/>
            <person name="McPherson D."/>
            <person name="Merkulov G."/>
            <person name="Milshina N.V."/>
            <person name="Mobarry C."/>
            <person name="Morris J."/>
            <person name="Moshrefi A."/>
            <person name="Mount S.M."/>
            <person name="Moy M."/>
            <person name="Murphy B."/>
            <person name="Murphy L."/>
            <person name="Muzny D.M."/>
            <person name="Nelson D.L."/>
            <person name="Nelson D.R."/>
            <person name="Nelson K.A."/>
            <person name="Nixon K."/>
            <person name="Nusskern D.R."/>
            <person name="Pacleb J.M."/>
            <person name="Palazzolo M."/>
            <person name="Pittman G.S."/>
            <person name="Pan S."/>
            <person name="Pollard J."/>
            <person name="Puri V."/>
            <person name="Reese M.G."/>
            <person name="Reinert K."/>
            <person name="Remington K."/>
            <person name="Saunders R.D.C."/>
            <person name="Scheeler F."/>
            <person name="Shen H."/>
            <person name="Shue B.C."/>
            <person name="Siden-Kiamos I."/>
            <person name="Simpson M."/>
            <person name="Skupski M.P."/>
            <person name="Smith T.J."/>
            <person name="Spier E."/>
            <person name="Spradling A.C."/>
            <person name="Stapleton M."/>
            <person name="Strong R."/>
            <person name="Sun E."/>
            <person name="Svirskas R."/>
            <person name="Tector C."/>
            <person name="Turner R."/>
            <person name="Venter E."/>
            <person name="Wang A.H."/>
            <person name="Wang X."/>
            <person name="Wang Z.-Y."/>
            <person name="Wassarman D.A."/>
            <person name="Weinstock G.M."/>
            <person name="Weissenbach J."/>
            <person name="Williams S.M."/>
            <person name="Woodage T."/>
            <person name="Worley K.C."/>
            <person name="Wu D."/>
            <person name="Yang S."/>
            <person name="Yao Q.A."/>
            <person name="Ye J."/>
            <person name="Yeh R.-F."/>
            <person name="Zaveri J.S."/>
            <person name="Zhan M."/>
            <person name="Zhang G."/>
            <person name="Zhao Q."/>
            <person name="Zheng L."/>
            <person name="Zheng X.H."/>
            <person name="Zhong F.N."/>
            <person name="Zhong W."/>
            <person name="Zhou X."/>
            <person name="Zhu S.C."/>
            <person name="Zhu X."/>
            <person name="Smith H.O."/>
            <person name="Gibbs R.A."/>
            <person name="Myers E.W."/>
            <person name="Rubin G.M."/>
            <person name="Venter J.C."/>
        </authorList>
    </citation>
    <scope>NUCLEOTIDE SEQUENCE [LARGE SCALE GENOMIC DNA]</scope>
    <source>
        <strain>Berkeley</strain>
    </source>
</reference>
<reference key="2">
    <citation type="journal article" date="2002" name="Genome Biol.">
        <title>Annotation of the Drosophila melanogaster euchromatic genome: a systematic review.</title>
        <authorList>
            <person name="Misra S."/>
            <person name="Crosby M.A."/>
            <person name="Mungall C.J."/>
            <person name="Matthews B.B."/>
            <person name="Campbell K.S."/>
            <person name="Hradecky P."/>
            <person name="Huang Y."/>
            <person name="Kaminker J.S."/>
            <person name="Millburn G.H."/>
            <person name="Prochnik S.E."/>
            <person name="Smith C.D."/>
            <person name="Tupy J.L."/>
            <person name="Whitfield E.J."/>
            <person name="Bayraktaroglu L."/>
            <person name="Berman B.P."/>
            <person name="Bettencourt B.R."/>
            <person name="Celniker S.E."/>
            <person name="de Grey A.D.N.J."/>
            <person name="Drysdale R.A."/>
            <person name="Harris N.L."/>
            <person name="Richter J."/>
            <person name="Russo S."/>
            <person name="Schroeder A.J."/>
            <person name="Shu S.Q."/>
            <person name="Stapleton M."/>
            <person name="Yamada C."/>
            <person name="Ashburner M."/>
            <person name="Gelbart W.M."/>
            <person name="Rubin G.M."/>
            <person name="Lewis S.E."/>
        </authorList>
    </citation>
    <scope>GENOME REANNOTATION</scope>
    <source>
        <strain>Berkeley</strain>
    </source>
</reference>
<reference key="3">
    <citation type="journal article" date="2002" name="Genome Biol.">
        <title>A Drosophila full-length cDNA resource.</title>
        <authorList>
            <person name="Stapleton M."/>
            <person name="Carlson J.W."/>
            <person name="Brokstein P."/>
            <person name="Yu C."/>
            <person name="Champe M."/>
            <person name="George R.A."/>
            <person name="Guarin H."/>
            <person name="Kronmiller B."/>
            <person name="Pacleb J.M."/>
            <person name="Park S."/>
            <person name="Wan K.H."/>
            <person name="Rubin G.M."/>
            <person name="Celniker S.E."/>
        </authorList>
    </citation>
    <scope>NUCLEOTIDE SEQUENCE [LARGE SCALE MRNA]</scope>
    <source>
        <strain>Berkeley</strain>
        <tissue>Ovary</tissue>
    </source>
</reference>
<reference key="4">
    <citation type="journal article" date="2007" name="Mol. Biosyst.">
        <title>An integrated chemical, mass spectrometric and computational strategy for (quantitative) phosphoproteomics: application to Drosophila melanogaster Kc167 cells.</title>
        <authorList>
            <person name="Bodenmiller B."/>
            <person name="Mueller L.N."/>
            <person name="Pedrioli P.G.A."/>
            <person name="Pflieger D."/>
            <person name="Juenger M.A."/>
            <person name="Eng J.K."/>
            <person name="Aebersold R."/>
            <person name="Tao W.A."/>
        </authorList>
    </citation>
    <scope>PHOSPHORYLATION [LARGE SCALE ANALYSIS] AT THR-185</scope>
    <scope>IDENTIFICATION BY MASS SPECTROMETRY</scope>
</reference>
<reference key="5">
    <citation type="journal article" date="2013" name="PLoS ONE">
        <title>The Smc5/Smc6/MAGE complex confers resistance to caffeine and genotoxic stress in Drosophila melanogaster.</title>
        <authorList>
            <person name="Li X."/>
            <person name="Zhuo R."/>
            <person name="Tiong S."/>
            <person name="Di Cara F."/>
            <person name="King-Jones K."/>
            <person name="Hughes S.C."/>
            <person name="Campbell S.D."/>
            <person name="Wevrick R."/>
        </authorList>
    </citation>
    <scope>FUNCTION</scope>
    <scope>IDENTIFICATION IN SMC5-SMC6 COMPLEX</scope>
    <scope>INTERACTION WITH MAGE</scope>
</reference>
<keyword id="KW-0227">DNA damage</keyword>
<keyword id="KW-0233">DNA recombination</keyword>
<keyword id="KW-0234">DNA repair</keyword>
<keyword id="KW-0479">Metal-binding</keyword>
<keyword id="KW-0539">Nucleus</keyword>
<keyword id="KW-0597">Phosphoprotein</keyword>
<keyword id="KW-1185">Reference proteome</keyword>
<keyword id="KW-0808">Transferase</keyword>
<keyword id="KW-0833">Ubl conjugation pathway</keyword>
<keyword id="KW-0862">Zinc</keyword>
<keyword id="KW-0863">Zinc-finger</keyword>
<evidence type="ECO:0000250" key="1"/>
<evidence type="ECO:0000250" key="2">
    <source>
        <dbReference type="UniProtKB" id="Q8WV22"/>
    </source>
</evidence>
<evidence type="ECO:0000255" key="3">
    <source>
        <dbReference type="PROSITE-ProRule" id="PRU00175"/>
    </source>
</evidence>
<evidence type="ECO:0000269" key="4">
    <source>
    </source>
</evidence>
<evidence type="ECO:0000269" key="5">
    <source>
    </source>
</evidence>
<evidence type="ECO:0000305" key="6"/>
<evidence type="ECO:0000312" key="7">
    <source>
        <dbReference type="FlyBase" id="FBgn0031848"/>
    </source>
</evidence>
<feature type="chain" id="PRO_0000372845" description="Non-structural maintenance of chromosomes element 1 homolog">
    <location>
        <begin position="1"/>
        <end position="235"/>
    </location>
</feature>
<feature type="zinc finger region" description="RING-type; atypical" evidence="3">
    <location>
        <begin position="181"/>
        <end position="225"/>
    </location>
</feature>
<feature type="modified residue" description="Phosphothreonine" evidence="4">
    <location>
        <position position="185"/>
    </location>
</feature>
<organism>
    <name type="scientific">Drosophila melanogaster</name>
    <name type="common">Fruit fly</name>
    <dbReference type="NCBI Taxonomy" id="7227"/>
    <lineage>
        <taxon>Eukaryota</taxon>
        <taxon>Metazoa</taxon>
        <taxon>Ecdysozoa</taxon>
        <taxon>Arthropoda</taxon>
        <taxon>Hexapoda</taxon>
        <taxon>Insecta</taxon>
        <taxon>Pterygota</taxon>
        <taxon>Neoptera</taxon>
        <taxon>Endopterygota</taxon>
        <taxon>Diptera</taxon>
        <taxon>Brachycera</taxon>
        <taxon>Muscomorpha</taxon>
        <taxon>Ephydroidea</taxon>
        <taxon>Drosophilidae</taxon>
        <taxon>Drosophila</taxon>
        <taxon>Sophophora</taxon>
    </lineage>
</organism>